<sequence>MAKKVAGQLKLQVPAGAANPSPPIGPALGQRGINIMEFCKAFNAASQEMEKGSPIPVLITYYQDKSFTFVMKTPPVTYFLKKAANLKSGSKTPGKASAGTITRDKVRAIAEAKMKDLNAADVEAAMRMIEGSARSMGLEVVG</sequence>
<dbReference type="EMBL" id="AM040264">
    <property type="protein sequence ID" value="CAJ11224.1"/>
    <property type="molecule type" value="Genomic_DNA"/>
</dbReference>
<dbReference type="RefSeq" id="WP_002964374.1">
    <property type="nucleotide sequence ID" value="NZ_KN046823.1"/>
</dbReference>
<dbReference type="SMR" id="Q2YM11"/>
<dbReference type="STRING" id="359391.BAB1_1268"/>
<dbReference type="GeneID" id="97533513"/>
<dbReference type="KEGG" id="bmf:BAB1_1268"/>
<dbReference type="PATRIC" id="fig|359391.11.peg.168"/>
<dbReference type="HOGENOM" id="CLU_074237_2_0_5"/>
<dbReference type="PhylomeDB" id="Q2YM11"/>
<dbReference type="Proteomes" id="UP000002719">
    <property type="component" value="Chromosome I"/>
</dbReference>
<dbReference type="GO" id="GO:0022625">
    <property type="term" value="C:cytosolic large ribosomal subunit"/>
    <property type="evidence" value="ECO:0007669"/>
    <property type="project" value="TreeGrafter"/>
</dbReference>
<dbReference type="GO" id="GO:0070180">
    <property type="term" value="F:large ribosomal subunit rRNA binding"/>
    <property type="evidence" value="ECO:0007669"/>
    <property type="project" value="UniProtKB-UniRule"/>
</dbReference>
<dbReference type="GO" id="GO:0003735">
    <property type="term" value="F:structural constituent of ribosome"/>
    <property type="evidence" value="ECO:0007669"/>
    <property type="project" value="InterPro"/>
</dbReference>
<dbReference type="GO" id="GO:0006412">
    <property type="term" value="P:translation"/>
    <property type="evidence" value="ECO:0007669"/>
    <property type="project" value="UniProtKB-UniRule"/>
</dbReference>
<dbReference type="CDD" id="cd00349">
    <property type="entry name" value="Ribosomal_L11"/>
    <property type="match status" value="1"/>
</dbReference>
<dbReference type="FunFam" id="1.10.10.250:FF:000001">
    <property type="entry name" value="50S ribosomal protein L11"/>
    <property type="match status" value="1"/>
</dbReference>
<dbReference type="FunFam" id="3.30.1550.10:FF:000001">
    <property type="entry name" value="50S ribosomal protein L11"/>
    <property type="match status" value="1"/>
</dbReference>
<dbReference type="Gene3D" id="1.10.10.250">
    <property type="entry name" value="Ribosomal protein L11, C-terminal domain"/>
    <property type="match status" value="1"/>
</dbReference>
<dbReference type="Gene3D" id="3.30.1550.10">
    <property type="entry name" value="Ribosomal protein L11/L12, N-terminal domain"/>
    <property type="match status" value="1"/>
</dbReference>
<dbReference type="HAMAP" id="MF_00736">
    <property type="entry name" value="Ribosomal_uL11"/>
    <property type="match status" value="1"/>
</dbReference>
<dbReference type="InterPro" id="IPR000911">
    <property type="entry name" value="Ribosomal_uL11"/>
</dbReference>
<dbReference type="InterPro" id="IPR006519">
    <property type="entry name" value="Ribosomal_uL11_bac-typ"/>
</dbReference>
<dbReference type="InterPro" id="IPR020783">
    <property type="entry name" value="Ribosomal_uL11_C"/>
</dbReference>
<dbReference type="InterPro" id="IPR036769">
    <property type="entry name" value="Ribosomal_uL11_C_sf"/>
</dbReference>
<dbReference type="InterPro" id="IPR020785">
    <property type="entry name" value="Ribosomal_uL11_CS"/>
</dbReference>
<dbReference type="InterPro" id="IPR020784">
    <property type="entry name" value="Ribosomal_uL11_N"/>
</dbReference>
<dbReference type="InterPro" id="IPR036796">
    <property type="entry name" value="Ribosomal_uL11_N_sf"/>
</dbReference>
<dbReference type="NCBIfam" id="TIGR01632">
    <property type="entry name" value="L11_bact"/>
    <property type="match status" value="1"/>
</dbReference>
<dbReference type="PANTHER" id="PTHR11661">
    <property type="entry name" value="60S RIBOSOMAL PROTEIN L12"/>
    <property type="match status" value="1"/>
</dbReference>
<dbReference type="PANTHER" id="PTHR11661:SF1">
    <property type="entry name" value="LARGE RIBOSOMAL SUBUNIT PROTEIN UL11M"/>
    <property type="match status" value="1"/>
</dbReference>
<dbReference type="Pfam" id="PF00298">
    <property type="entry name" value="Ribosomal_L11"/>
    <property type="match status" value="1"/>
</dbReference>
<dbReference type="Pfam" id="PF03946">
    <property type="entry name" value="Ribosomal_L11_N"/>
    <property type="match status" value="1"/>
</dbReference>
<dbReference type="SMART" id="SM00649">
    <property type="entry name" value="RL11"/>
    <property type="match status" value="1"/>
</dbReference>
<dbReference type="SUPFAM" id="SSF54747">
    <property type="entry name" value="Ribosomal L11/L12e N-terminal domain"/>
    <property type="match status" value="1"/>
</dbReference>
<dbReference type="SUPFAM" id="SSF46906">
    <property type="entry name" value="Ribosomal protein L11, C-terminal domain"/>
    <property type="match status" value="1"/>
</dbReference>
<dbReference type="PROSITE" id="PS00359">
    <property type="entry name" value="RIBOSOMAL_L11"/>
    <property type="match status" value="1"/>
</dbReference>
<keyword id="KW-0488">Methylation</keyword>
<keyword id="KW-1185">Reference proteome</keyword>
<keyword id="KW-0687">Ribonucleoprotein</keyword>
<keyword id="KW-0689">Ribosomal protein</keyword>
<keyword id="KW-0694">RNA-binding</keyword>
<keyword id="KW-0699">rRNA-binding</keyword>
<reference key="1">
    <citation type="journal article" date="2005" name="Infect. Immun.">
        <title>Whole-genome analyses of speciation events in pathogenic Brucellae.</title>
        <authorList>
            <person name="Chain P.S."/>
            <person name="Comerci D.J."/>
            <person name="Tolmasky M.E."/>
            <person name="Larimer F.W."/>
            <person name="Malfatti S.A."/>
            <person name="Vergez L.M."/>
            <person name="Aguero F."/>
            <person name="Land M.L."/>
            <person name="Ugalde R.A."/>
            <person name="Garcia E."/>
        </authorList>
    </citation>
    <scope>NUCLEOTIDE SEQUENCE [LARGE SCALE GENOMIC DNA]</scope>
    <source>
        <strain>2308</strain>
    </source>
</reference>
<feature type="chain" id="PRO_0000258127" description="Large ribosomal subunit protein uL11">
    <location>
        <begin position="1"/>
        <end position="142"/>
    </location>
</feature>
<protein>
    <recommendedName>
        <fullName evidence="1">Large ribosomal subunit protein uL11</fullName>
    </recommendedName>
    <alternativeName>
        <fullName evidence="2">50S ribosomal protein L11</fullName>
    </alternativeName>
</protein>
<accession>Q2YM11</accession>
<comment type="function">
    <text evidence="1">Forms part of the ribosomal stalk which helps the ribosome interact with GTP-bound translation factors.</text>
</comment>
<comment type="subunit">
    <text evidence="1">Part of the ribosomal stalk of the 50S ribosomal subunit. Interacts with L10 and the large rRNA to form the base of the stalk. L10 forms an elongated spine to which L12 dimers bind in a sequential fashion forming a multimeric L10(L12)X complex.</text>
</comment>
<comment type="PTM">
    <text evidence="1">One or more lysine residues are methylated.</text>
</comment>
<comment type="similarity">
    <text evidence="1">Belongs to the universal ribosomal protein uL11 family.</text>
</comment>
<name>RL11_BRUA2</name>
<evidence type="ECO:0000255" key="1">
    <source>
        <dbReference type="HAMAP-Rule" id="MF_00736"/>
    </source>
</evidence>
<evidence type="ECO:0000305" key="2"/>
<proteinExistence type="inferred from homology"/>
<gene>
    <name evidence="1" type="primary">rplK</name>
    <name type="ordered locus">BAB1_1268</name>
</gene>
<organism>
    <name type="scientific">Brucella abortus (strain 2308)</name>
    <dbReference type="NCBI Taxonomy" id="359391"/>
    <lineage>
        <taxon>Bacteria</taxon>
        <taxon>Pseudomonadati</taxon>
        <taxon>Pseudomonadota</taxon>
        <taxon>Alphaproteobacteria</taxon>
        <taxon>Hyphomicrobiales</taxon>
        <taxon>Brucellaceae</taxon>
        <taxon>Brucella/Ochrobactrum group</taxon>
        <taxon>Brucella</taxon>
    </lineage>
</organism>